<proteinExistence type="inferred from homology"/>
<sequence length="79" mass="9204">MAQQRRGGFKRRKKVDYIAANKIEYVDYKDTELLSRFVSERGKILPRRVTGTSAKNQRKVTTAIKRARVMALMPFVNED</sequence>
<dbReference type="EMBL" id="CP000920">
    <property type="protein sequence ID" value="ACO20346.1"/>
    <property type="molecule type" value="Genomic_DNA"/>
</dbReference>
<dbReference type="RefSeq" id="WP_000068664.1">
    <property type="nucleotide sequence ID" value="NC_012467.1"/>
</dbReference>
<dbReference type="SMR" id="C1CLN8"/>
<dbReference type="GeneID" id="93963800"/>
<dbReference type="KEGG" id="spp:SPP_1562"/>
<dbReference type="HOGENOM" id="CLU_148710_2_2_9"/>
<dbReference type="GO" id="GO:0022627">
    <property type="term" value="C:cytosolic small ribosomal subunit"/>
    <property type="evidence" value="ECO:0007669"/>
    <property type="project" value="TreeGrafter"/>
</dbReference>
<dbReference type="GO" id="GO:0070181">
    <property type="term" value="F:small ribosomal subunit rRNA binding"/>
    <property type="evidence" value="ECO:0007669"/>
    <property type="project" value="TreeGrafter"/>
</dbReference>
<dbReference type="GO" id="GO:0003735">
    <property type="term" value="F:structural constituent of ribosome"/>
    <property type="evidence" value="ECO:0007669"/>
    <property type="project" value="InterPro"/>
</dbReference>
<dbReference type="GO" id="GO:0006412">
    <property type="term" value="P:translation"/>
    <property type="evidence" value="ECO:0007669"/>
    <property type="project" value="UniProtKB-UniRule"/>
</dbReference>
<dbReference type="FunFam" id="4.10.640.10:FF:000003">
    <property type="entry name" value="30S ribosomal protein S18"/>
    <property type="match status" value="1"/>
</dbReference>
<dbReference type="Gene3D" id="4.10.640.10">
    <property type="entry name" value="Ribosomal protein S18"/>
    <property type="match status" value="1"/>
</dbReference>
<dbReference type="HAMAP" id="MF_00270">
    <property type="entry name" value="Ribosomal_bS18"/>
    <property type="match status" value="1"/>
</dbReference>
<dbReference type="InterPro" id="IPR001648">
    <property type="entry name" value="Ribosomal_bS18"/>
</dbReference>
<dbReference type="InterPro" id="IPR018275">
    <property type="entry name" value="Ribosomal_bS18_CS"/>
</dbReference>
<dbReference type="InterPro" id="IPR036870">
    <property type="entry name" value="Ribosomal_bS18_sf"/>
</dbReference>
<dbReference type="NCBIfam" id="TIGR00165">
    <property type="entry name" value="S18"/>
    <property type="match status" value="1"/>
</dbReference>
<dbReference type="PANTHER" id="PTHR13479">
    <property type="entry name" value="30S RIBOSOMAL PROTEIN S18"/>
    <property type="match status" value="1"/>
</dbReference>
<dbReference type="PANTHER" id="PTHR13479:SF40">
    <property type="entry name" value="SMALL RIBOSOMAL SUBUNIT PROTEIN BS18M"/>
    <property type="match status" value="1"/>
</dbReference>
<dbReference type="Pfam" id="PF01084">
    <property type="entry name" value="Ribosomal_S18"/>
    <property type="match status" value="1"/>
</dbReference>
<dbReference type="PRINTS" id="PR00974">
    <property type="entry name" value="RIBOSOMALS18"/>
</dbReference>
<dbReference type="SUPFAM" id="SSF46911">
    <property type="entry name" value="Ribosomal protein S18"/>
    <property type="match status" value="1"/>
</dbReference>
<dbReference type="PROSITE" id="PS00057">
    <property type="entry name" value="RIBOSOMAL_S18"/>
    <property type="match status" value="1"/>
</dbReference>
<evidence type="ECO:0000255" key="1">
    <source>
        <dbReference type="HAMAP-Rule" id="MF_00270"/>
    </source>
</evidence>
<evidence type="ECO:0000305" key="2"/>
<accession>C1CLN8</accession>
<keyword id="KW-0687">Ribonucleoprotein</keyword>
<keyword id="KW-0689">Ribosomal protein</keyword>
<keyword id="KW-0694">RNA-binding</keyword>
<keyword id="KW-0699">rRNA-binding</keyword>
<protein>
    <recommendedName>
        <fullName evidence="1">Small ribosomal subunit protein bS18</fullName>
    </recommendedName>
    <alternativeName>
        <fullName evidence="2">30S ribosomal protein S18</fullName>
    </alternativeName>
</protein>
<gene>
    <name evidence="1" type="primary">rpsR</name>
    <name type="ordered locus">SPP_1562</name>
</gene>
<comment type="function">
    <text evidence="1">Binds as a heterodimer with protein bS6 to the central domain of the 16S rRNA, where it helps stabilize the platform of the 30S subunit.</text>
</comment>
<comment type="subunit">
    <text evidence="1">Part of the 30S ribosomal subunit. Forms a tight heterodimer with protein bS6.</text>
</comment>
<comment type="similarity">
    <text evidence="1">Belongs to the bacterial ribosomal protein bS18 family.</text>
</comment>
<organism>
    <name type="scientific">Streptococcus pneumoniae (strain P1031)</name>
    <dbReference type="NCBI Taxonomy" id="488223"/>
    <lineage>
        <taxon>Bacteria</taxon>
        <taxon>Bacillati</taxon>
        <taxon>Bacillota</taxon>
        <taxon>Bacilli</taxon>
        <taxon>Lactobacillales</taxon>
        <taxon>Streptococcaceae</taxon>
        <taxon>Streptococcus</taxon>
    </lineage>
</organism>
<feature type="chain" id="PRO_1000196534" description="Small ribosomal subunit protein bS18">
    <location>
        <begin position="1"/>
        <end position="79"/>
    </location>
</feature>
<name>RS18_STRZP</name>
<reference key="1">
    <citation type="journal article" date="2010" name="Genome Biol.">
        <title>Structure and dynamics of the pan-genome of Streptococcus pneumoniae and closely related species.</title>
        <authorList>
            <person name="Donati C."/>
            <person name="Hiller N.L."/>
            <person name="Tettelin H."/>
            <person name="Muzzi A."/>
            <person name="Croucher N.J."/>
            <person name="Angiuoli S.V."/>
            <person name="Oggioni M."/>
            <person name="Dunning Hotopp J.C."/>
            <person name="Hu F.Z."/>
            <person name="Riley D.R."/>
            <person name="Covacci A."/>
            <person name="Mitchell T.J."/>
            <person name="Bentley S.D."/>
            <person name="Kilian M."/>
            <person name="Ehrlich G.D."/>
            <person name="Rappuoli R."/>
            <person name="Moxon E.R."/>
            <person name="Masignani V."/>
        </authorList>
    </citation>
    <scope>NUCLEOTIDE SEQUENCE [LARGE SCALE GENOMIC DNA]</scope>
    <source>
        <strain>P1031</strain>
    </source>
</reference>